<accession>Q8QFQ9</accession>
<sequence>MKSACLIILASLVVCNLTLARGQGIPAEEETGDRQTIDDIILQRAESLLLRSILKNIGDEDGANEGLTSQPEWLVKRQHPGKRYQEELEKRQHPGKREEDEDEDYDEVQKRQHPGKREDEFDSFVELQRRQHPGKRLILEQITENPAFLSELSKRQHPGKRYVMYYSKRQHPGRREVDDESDAGDLRELEKRQHPGKRYLDNTSPDLGANSPCDVLDPGCSKANLLLQLLDNVNKSRAEKRQHPGKRSAPVEDLTEQE</sequence>
<keyword id="KW-0027">Amidation</keyword>
<keyword id="KW-0165">Cleavage on pair of basic residues</keyword>
<keyword id="KW-0372">Hormone</keyword>
<keyword id="KW-0873">Pyrrolidone carboxylic acid</keyword>
<keyword id="KW-0677">Repeat</keyword>
<keyword id="KW-0964">Secreted</keyword>
<keyword id="KW-0732">Signal</keyword>
<feature type="signal peptide" evidence="2">
    <location>
        <begin position="1"/>
        <end position="22"/>
    </location>
</feature>
<feature type="chain" id="PRO_0000041920" description="Pro-thyrotropin-releasing hormone-A">
    <location>
        <begin position="23"/>
        <end position="258"/>
    </location>
</feature>
<feature type="peptide" id="PRO_0000041921" description="Thyrotropin-releasing hormone">
    <location>
        <begin position="78"/>
        <end position="80"/>
    </location>
</feature>
<feature type="peptide" id="PRO_0000041922" description="Thyrotropin-releasing hormone">
    <location>
        <begin position="92"/>
        <end position="94"/>
    </location>
</feature>
<feature type="peptide" id="PRO_0000041923" description="Thyrotropin-releasing hormone">
    <location>
        <begin position="112"/>
        <end position="114"/>
    </location>
</feature>
<feature type="peptide" id="PRO_0000041924" description="Thyrotropin-releasing hormone">
    <location>
        <begin position="131"/>
        <end position="133"/>
    </location>
</feature>
<feature type="peptide" id="PRO_0000041925" description="Thyrotropin-releasing hormone">
    <location>
        <begin position="156"/>
        <end position="158"/>
    </location>
</feature>
<feature type="peptide" id="PRO_0000041926" description="Thyrotropin-releasing hormone">
    <location>
        <begin position="170"/>
        <end position="172"/>
    </location>
</feature>
<feature type="peptide" id="PRO_0000041927" description="Thyrotropin-releasing hormone">
    <location>
        <begin position="193"/>
        <end position="195"/>
    </location>
</feature>
<feature type="peptide" id="PRO_0000041928" description="Thyrotropin-releasing hormone">
    <location>
        <begin position="242"/>
        <end position="244"/>
    </location>
</feature>
<feature type="region of interest" description="Disordered" evidence="3">
    <location>
        <begin position="84"/>
        <end position="124"/>
    </location>
</feature>
<feature type="region of interest" description="Disordered" evidence="3">
    <location>
        <begin position="166"/>
        <end position="215"/>
    </location>
</feature>
<feature type="region of interest" description="Disordered" evidence="3">
    <location>
        <begin position="236"/>
        <end position="258"/>
    </location>
</feature>
<feature type="compositionally biased region" description="Basic and acidic residues" evidence="3">
    <location>
        <begin position="84"/>
        <end position="98"/>
    </location>
</feature>
<feature type="compositionally biased region" description="Basic and acidic residues" evidence="3">
    <location>
        <begin position="107"/>
        <end position="119"/>
    </location>
</feature>
<feature type="compositionally biased region" description="Basic and acidic residues" evidence="3">
    <location>
        <begin position="184"/>
        <end position="193"/>
    </location>
</feature>
<feature type="modified residue" description="Pyrrolidone carboxylic acid" evidence="1">
    <location>
        <position position="78"/>
    </location>
</feature>
<feature type="modified residue" description="Proline amide" evidence="1">
    <location>
        <position position="80"/>
    </location>
</feature>
<feature type="modified residue" description="Pyrrolidone carboxylic acid" evidence="1">
    <location>
        <position position="92"/>
    </location>
</feature>
<feature type="modified residue" description="Proline amide" evidence="1">
    <location>
        <position position="94"/>
    </location>
</feature>
<feature type="modified residue" description="Pyrrolidone carboxylic acid" evidence="1">
    <location>
        <position position="112"/>
    </location>
</feature>
<feature type="modified residue" description="Proline amide" evidence="1">
    <location>
        <position position="114"/>
    </location>
</feature>
<feature type="modified residue" description="Pyrrolidone carboxylic acid" evidence="1">
    <location>
        <position position="131"/>
    </location>
</feature>
<feature type="modified residue" description="Proline amide" evidence="1">
    <location>
        <position position="133"/>
    </location>
</feature>
<feature type="modified residue" description="Pyrrolidone carboxylic acid" evidence="1">
    <location>
        <position position="156"/>
    </location>
</feature>
<feature type="modified residue" description="Proline amide" evidence="1">
    <location>
        <position position="158"/>
    </location>
</feature>
<feature type="modified residue" description="Pyrrolidone carboxylic acid" evidence="1">
    <location>
        <position position="170"/>
    </location>
</feature>
<feature type="modified residue" description="Proline amide" evidence="1">
    <location>
        <position position="172"/>
    </location>
</feature>
<feature type="modified residue" description="Pyrrolidone carboxylic acid" evidence="1">
    <location>
        <position position="193"/>
    </location>
</feature>
<feature type="modified residue" description="Proline amide" evidence="1">
    <location>
        <position position="195"/>
    </location>
</feature>
<feature type="modified residue" description="Pyrrolidone carboxylic acid" evidence="1">
    <location>
        <position position="242"/>
    </location>
</feature>
<feature type="modified residue" description="Proline amide" evidence="1">
    <location>
        <position position="244"/>
    </location>
</feature>
<gene>
    <name type="primary">trha</name>
</gene>
<evidence type="ECO:0000250" key="1"/>
<evidence type="ECO:0000255" key="2"/>
<evidence type="ECO:0000256" key="3">
    <source>
        <dbReference type="SAM" id="MobiDB-lite"/>
    </source>
</evidence>
<evidence type="ECO:0000305" key="4"/>
<comment type="function">
    <text evidence="1">Functions as a regulator of the biosynthesis of TSH in the anterior pituitary gland and as a neurotransmitter/ neuromodulator in the central and peripheral nervous systems.</text>
</comment>
<comment type="subcellular location">
    <subcellularLocation>
        <location>Secreted</location>
    </subcellularLocation>
</comment>
<comment type="similarity">
    <text evidence="4">Belongs to the TRH family.</text>
</comment>
<organism>
    <name type="scientific">Oncorhynchus nerka</name>
    <name type="common">Sockeye salmon</name>
    <name type="synonym">Salmo nerka</name>
    <dbReference type="NCBI Taxonomy" id="8023"/>
    <lineage>
        <taxon>Eukaryota</taxon>
        <taxon>Metazoa</taxon>
        <taxon>Chordata</taxon>
        <taxon>Craniata</taxon>
        <taxon>Vertebrata</taxon>
        <taxon>Euteleostomi</taxon>
        <taxon>Actinopterygii</taxon>
        <taxon>Neopterygii</taxon>
        <taxon>Teleostei</taxon>
        <taxon>Protacanthopterygii</taxon>
        <taxon>Salmoniformes</taxon>
        <taxon>Salmonidae</taxon>
        <taxon>Salmoninae</taxon>
        <taxon>Oncorhynchus</taxon>
    </lineage>
</organism>
<proteinExistence type="evidence at transcript level"/>
<dbReference type="EMBL" id="AB082956">
    <property type="protein sequence ID" value="BAB88661.1"/>
    <property type="molecule type" value="mRNA"/>
</dbReference>
<dbReference type="GO" id="GO:0005576">
    <property type="term" value="C:extracellular region"/>
    <property type="evidence" value="ECO:0007669"/>
    <property type="project" value="UniProtKB-SubCell"/>
</dbReference>
<dbReference type="GO" id="GO:0030141">
    <property type="term" value="C:secretory granule"/>
    <property type="evidence" value="ECO:0007669"/>
    <property type="project" value="TreeGrafter"/>
</dbReference>
<dbReference type="GO" id="GO:0008437">
    <property type="term" value="F:thyrotropin-releasing hormone activity"/>
    <property type="evidence" value="ECO:0007669"/>
    <property type="project" value="InterPro"/>
</dbReference>
<dbReference type="GO" id="GO:0042755">
    <property type="term" value="P:eating behavior"/>
    <property type="evidence" value="ECO:0007669"/>
    <property type="project" value="TreeGrafter"/>
</dbReference>
<dbReference type="GO" id="GO:0001692">
    <property type="term" value="P:histamine metabolic process"/>
    <property type="evidence" value="ECO:0007669"/>
    <property type="project" value="TreeGrafter"/>
</dbReference>
<dbReference type="GO" id="GO:0009755">
    <property type="term" value="P:hormone-mediated signaling pathway"/>
    <property type="evidence" value="ECO:0007669"/>
    <property type="project" value="InterPro"/>
</dbReference>
<dbReference type="GO" id="GO:0014050">
    <property type="term" value="P:negative regulation of glutamate secretion"/>
    <property type="evidence" value="ECO:0007669"/>
    <property type="project" value="TreeGrafter"/>
</dbReference>
<dbReference type="GO" id="GO:0014054">
    <property type="term" value="P:positive regulation of gamma-aminobutyric acid secretion"/>
    <property type="evidence" value="ECO:0007669"/>
    <property type="project" value="TreeGrafter"/>
</dbReference>
<dbReference type="GO" id="GO:0032024">
    <property type="term" value="P:positive regulation of insulin secretion"/>
    <property type="evidence" value="ECO:0007669"/>
    <property type="project" value="TreeGrafter"/>
</dbReference>
<dbReference type="InterPro" id="IPR008857">
    <property type="entry name" value="TRH"/>
</dbReference>
<dbReference type="PANTHER" id="PTHR17530">
    <property type="entry name" value="PRO-THYROTROPIN-RELEASING HORMONE"/>
    <property type="match status" value="1"/>
</dbReference>
<dbReference type="PANTHER" id="PTHR17530:SF2">
    <property type="entry name" value="PRO-THYROTROPIN-RELEASING HORMONE"/>
    <property type="match status" value="1"/>
</dbReference>
<dbReference type="Pfam" id="PF05438">
    <property type="entry name" value="TRH"/>
    <property type="match status" value="1"/>
</dbReference>
<dbReference type="PIRSF" id="PIRSF001795">
    <property type="entry name" value="TRH"/>
    <property type="match status" value="1"/>
</dbReference>
<reference key="1">
    <citation type="journal article" date="1996" name="J. Neuroendocrinol.">
        <title>Hydropathy profiles of predicted thyrotropin-releasing hormone precursors are highly conserved despite low similarity of primary structures.</title>
        <authorList>
            <person name="Ohide A."/>
            <person name="Ando H."/>
            <person name="Yanagisawa T."/>
            <person name="Urano A."/>
        </authorList>
    </citation>
    <scope>NUCLEOTIDE SEQUENCE [MRNA]</scope>
</reference>
<name>TRH_ONCNE</name>
<protein>
    <recommendedName>
        <fullName>Pro-thyrotropin-releasing hormone-A</fullName>
        <shortName>Pro-TRH-A</shortName>
    </recommendedName>
    <alternativeName>
        <fullName>Prothyroliberin type A</fullName>
    </alternativeName>
    <component>
        <recommendedName>
            <fullName>Thyrotropin-releasing hormone</fullName>
            <shortName>TRH</shortName>
        </recommendedName>
        <alternativeName>
            <fullName>Protirelin</fullName>
        </alternativeName>
        <alternativeName>
            <fullName>TSH-releasing factor</fullName>
        </alternativeName>
        <alternativeName>
            <fullName>Thyroliberin</fullName>
        </alternativeName>
        <alternativeName>
            <fullName>Thyrotropin-releasing factor</fullName>
            <shortName>TRF</shortName>
        </alternativeName>
    </component>
</protein>